<dbReference type="EC" id="3.1.3.5" evidence="1"/>
<dbReference type="EMBL" id="CP000675">
    <property type="protein sequence ID" value="ABQ54685.1"/>
    <property type="molecule type" value="Genomic_DNA"/>
</dbReference>
<dbReference type="RefSeq" id="WP_011946337.1">
    <property type="nucleotide sequence ID" value="NZ_JAPMSS010000002.1"/>
</dbReference>
<dbReference type="SMR" id="A5IBD5"/>
<dbReference type="KEGG" id="lpc:LPC_0707"/>
<dbReference type="HOGENOM" id="CLU_045192_1_2_6"/>
<dbReference type="GO" id="GO:0005737">
    <property type="term" value="C:cytoplasm"/>
    <property type="evidence" value="ECO:0007669"/>
    <property type="project" value="UniProtKB-SubCell"/>
</dbReference>
<dbReference type="GO" id="GO:0008254">
    <property type="term" value="F:3'-nucleotidase activity"/>
    <property type="evidence" value="ECO:0007669"/>
    <property type="project" value="TreeGrafter"/>
</dbReference>
<dbReference type="GO" id="GO:0008253">
    <property type="term" value="F:5'-nucleotidase activity"/>
    <property type="evidence" value="ECO:0007669"/>
    <property type="project" value="UniProtKB-UniRule"/>
</dbReference>
<dbReference type="GO" id="GO:0004309">
    <property type="term" value="F:exopolyphosphatase activity"/>
    <property type="evidence" value="ECO:0007669"/>
    <property type="project" value="TreeGrafter"/>
</dbReference>
<dbReference type="GO" id="GO:0046872">
    <property type="term" value="F:metal ion binding"/>
    <property type="evidence" value="ECO:0007669"/>
    <property type="project" value="UniProtKB-UniRule"/>
</dbReference>
<dbReference type="GO" id="GO:0000166">
    <property type="term" value="F:nucleotide binding"/>
    <property type="evidence" value="ECO:0007669"/>
    <property type="project" value="UniProtKB-KW"/>
</dbReference>
<dbReference type="FunFam" id="3.40.1210.10:FF:000001">
    <property type="entry name" value="5'/3'-nucleotidase SurE"/>
    <property type="match status" value="1"/>
</dbReference>
<dbReference type="Gene3D" id="3.40.1210.10">
    <property type="entry name" value="Survival protein SurE-like phosphatase/nucleotidase"/>
    <property type="match status" value="1"/>
</dbReference>
<dbReference type="HAMAP" id="MF_00060">
    <property type="entry name" value="SurE"/>
    <property type="match status" value="1"/>
</dbReference>
<dbReference type="InterPro" id="IPR030048">
    <property type="entry name" value="SurE"/>
</dbReference>
<dbReference type="InterPro" id="IPR002828">
    <property type="entry name" value="SurE-like_Pase/nucleotidase"/>
</dbReference>
<dbReference type="InterPro" id="IPR036523">
    <property type="entry name" value="SurE-like_sf"/>
</dbReference>
<dbReference type="NCBIfam" id="NF001489">
    <property type="entry name" value="PRK00346.1-3"/>
    <property type="match status" value="1"/>
</dbReference>
<dbReference type="NCBIfam" id="NF001490">
    <property type="entry name" value="PRK00346.1-4"/>
    <property type="match status" value="1"/>
</dbReference>
<dbReference type="NCBIfam" id="TIGR00087">
    <property type="entry name" value="surE"/>
    <property type="match status" value="1"/>
</dbReference>
<dbReference type="PANTHER" id="PTHR30457">
    <property type="entry name" value="5'-NUCLEOTIDASE SURE"/>
    <property type="match status" value="1"/>
</dbReference>
<dbReference type="PANTHER" id="PTHR30457:SF12">
    <property type="entry name" value="5'_3'-NUCLEOTIDASE SURE"/>
    <property type="match status" value="1"/>
</dbReference>
<dbReference type="Pfam" id="PF01975">
    <property type="entry name" value="SurE"/>
    <property type="match status" value="1"/>
</dbReference>
<dbReference type="SUPFAM" id="SSF64167">
    <property type="entry name" value="SurE-like"/>
    <property type="match status" value="1"/>
</dbReference>
<comment type="function">
    <text evidence="1">Nucleotidase that shows phosphatase activity on nucleoside 5'-monophosphates.</text>
</comment>
<comment type="catalytic activity">
    <reaction evidence="1">
        <text>a ribonucleoside 5'-phosphate + H2O = a ribonucleoside + phosphate</text>
        <dbReference type="Rhea" id="RHEA:12484"/>
        <dbReference type="ChEBI" id="CHEBI:15377"/>
        <dbReference type="ChEBI" id="CHEBI:18254"/>
        <dbReference type="ChEBI" id="CHEBI:43474"/>
        <dbReference type="ChEBI" id="CHEBI:58043"/>
        <dbReference type="EC" id="3.1.3.5"/>
    </reaction>
</comment>
<comment type="cofactor">
    <cofactor evidence="1">
        <name>a divalent metal cation</name>
        <dbReference type="ChEBI" id="CHEBI:60240"/>
    </cofactor>
    <text evidence="1">Binds 1 divalent metal cation per subunit.</text>
</comment>
<comment type="subcellular location">
    <subcellularLocation>
        <location evidence="1">Cytoplasm</location>
    </subcellularLocation>
</comment>
<comment type="similarity">
    <text evidence="1">Belongs to the SurE nucleotidase family.</text>
</comment>
<reference key="1">
    <citation type="submission" date="2006-11" db="EMBL/GenBank/DDBJ databases">
        <title>Identification and characterization of a new conjugation/ type IVA secretion system (trb/tra) of L. pneumophila Corby localized on a mobile genomic island.</title>
        <authorList>
            <person name="Gloeckner G."/>
            <person name="Albert-Weissenberger C."/>
            <person name="Weinmann E."/>
            <person name="Jacobi S."/>
            <person name="Schunder E."/>
            <person name="Steinert M."/>
            <person name="Buchrieser C."/>
            <person name="Hacker J."/>
            <person name="Heuner K."/>
        </authorList>
    </citation>
    <scope>NUCLEOTIDE SEQUENCE [LARGE SCALE GENOMIC DNA]</scope>
    <source>
        <strain>Corby</strain>
    </source>
</reference>
<keyword id="KW-0963">Cytoplasm</keyword>
<keyword id="KW-0378">Hydrolase</keyword>
<keyword id="KW-0479">Metal-binding</keyword>
<keyword id="KW-0547">Nucleotide-binding</keyword>
<evidence type="ECO:0000255" key="1">
    <source>
        <dbReference type="HAMAP-Rule" id="MF_00060"/>
    </source>
</evidence>
<gene>
    <name evidence="1" type="primary">surE</name>
    <name type="ordered locus">LPC_0707</name>
</gene>
<protein>
    <recommendedName>
        <fullName evidence="1">5'-nucleotidase SurE</fullName>
        <ecNumber evidence="1">3.1.3.5</ecNumber>
    </recommendedName>
    <alternativeName>
        <fullName evidence="1">Nucleoside 5'-monophosphate phosphohydrolase</fullName>
    </alternativeName>
</protein>
<feature type="chain" id="PRO_1000007744" description="5'-nucleotidase SurE">
    <location>
        <begin position="1"/>
        <end position="252"/>
    </location>
</feature>
<feature type="binding site" evidence="1">
    <location>
        <position position="8"/>
    </location>
    <ligand>
        <name>a divalent metal cation</name>
        <dbReference type="ChEBI" id="CHEBI:60240"/>
    </ligand>
</feature>
<feature type="binding site" evidence="1">
    <location>
        <position position="9"/>
    </location>
    <ligand>
        <name>a divalent metal cation</name>
        <dbReference type="ChEBI" id="CHEBI:60240"/>
    </ligand>
</feature>
<feature type="binding site" evidence="1">
    <location>
        <position position="39"/>
    </location>
    <ligand>
        <name>a divalent metal cation</name>
        <dbReference type="ChEBI" id="CHEBI:60240"/>
    </ligand>
</feature>
<feature type="binding site" evidence="1">
    <location>
        <position position="91"/>
    </location>
    <ligand>
        <name>a divalent metal cation</name>
        <dbReference type="ChEBI" id="CHEBI:60240"/>
    </ligand>
</feature>
<proteinExistence type="inferred from homology"/>
<name>SURE_LEGPC</name>
<accession>A5IBD5</accession>
<sequence>MKILVSNDDGVLAPGIKILANELSTLGEVKVVAPDRNRSGASNSLTLTQPLRVKQLDNGYYSVDGTPTDCVHLALTGFLEPIADIVVSGINEGANLGDDVLYSGTVAAAMEGRYLGLPAIAISMVGDNIQHYETAAIIAKQLVIKLSANKLPSQTILNVNVPDLPLNQIRGMQVTRLGTRHSAEPIIKEYDPRGRPIYWVGPPGIEADAGAGTDFFAIKTGHVSITPLHLDMTHYKLFDHLSNLLNEICIEN</sequence>
<organism>
    <name type="scientific">Legionella pneumophila (strain Corby)</name>
    <dbReference type="NCBI Taxonomy" id="400673"/>
    <lineage>
        <taxon>Bacteria</taxon>
        <taxon>Pseudomonadati</taxon>
        <taxon>Pseudomonadota</taxon>
        <taxon>Gammaproteobacteria</taxon>
        <taxon>Legionellales</taxon>
        <taxon>Legionellaceae</taxon>
        <taxon>Legionella</taxon>
    </lineage>
</organism>